<evidence type="ECO:0000250" key="1"/>
<evidence type="ECO:0000255" key="2"/>
<evidence type="ECO:0000256" key="3">
    <source>
        <dbReference type="SAM" id="MobiDB-lite"/>
    </source>
</evidence>
<evidence type="ECO:0000305" key="4"/>
<accession>Q27319</accession>
<protein>
    <recommendedName>
        <fullName>Gelsolin, cytoplasmic</fullName>
    </recommendedName>
    <alternativeName>
        <fullName>Actin-depolymerizing factor</fullName>
        <shortName>ADF</shortName>
    </alternativeName>
</protein>
<dbReference type="EMBL" id="Z29534">
    <property type="protein sequence ID" value="CAA82650.1"/>
    <property type="molecule type" value="mRNA"/>
</dbReference>
<dbReference type="PIR" id="S41391">
    <property type="entry name" value="S41391"/>
</dbReference>
<dbReference type="PIR" id="S53373">
    <property type="entry name" value="S53373"/>
</dbReference>
<dbReference type="SMR" id="Q27319"/>
<dbReference type="OrthoDB" id="6375767at2759"/>
<dbReference type="GO" id="GO:0015629">
    <property type="term" value="C:actin cytoskeleton"/>
    <property type="evidence" value="ECO:0007669"/>
    <property type="project" value="TreeGrafter"/>
</dbReference>
<dbReference type="GO" id="GO:0005737">
    <property type="term" value="C:cytoplasm"/>
    <property type="evidence" value="ECO:0007669"/>
    <property type="project" value="UniProtKB-KW"/>
</dbReference>
<dbReference type="GO" id="GO:0051015">
    <property type="term" value="F:actin filament binding"/>
    <property type="evidence" value="ECO:0007669"/>
    <property type="project" value="InterPro"/>
</dbReference>
<dbReference type="GO" id="GO:0046872">
    <property type="term" value="F:metal ion binding"/>
    <property type="evidence" value="ECO:0007669"/>
    <property type="project" value="UniProtKB-KW"/>
</dbReference>
<dbReference type="GO" id="GO:0005546">
    <property type="term" value="F:phosphatidylinositol-4,5-bisphosphate binding"/>
    <property type="evidence" value="ECO:0007669"/>
    <property type="project" value="TreeGrafter"/>
</dbReference>
<dbReference type="GO" id="GO:0051014">
    <property type="term" value="P:actin filament severing"/>
    <property type="evidence" value="ECO:0007669"/>
    <property type="project" value="TreeGrafter"/>
</dbReference>
<dbReference type="GO" id="GO:0008154">
    <property type="term" value="P:actin polymerization or depolymerization"/>
    <property type="evidence" value="ECO:0007669"/>
    <property type="project" value="TreeGrafter"/>
</dbReference>
<dbReference type="GO" id="GO:0051016">
    <property type="term" value="P:barbed-end actin filament capping"/>
    <property type="evidence" value="ECO:0007669"/>
    <property type="project" value="TreeGrafter"/>
</dbReference>
<dbReference type="CDD" id="cd11290">
    <property type="entry name" value="gelsolin_S1_like"/>
    <property type="match status" value="1"/>
</dbReference>
<dbReference type="CDD" id="cd11289">
    <property type="entry name" value="gelsolin_S2_like"/>
    <property type="match status" value="1"/>
</dbReference>
<dbReference type="CDD" id="cd11292">
    <property type="entry name" value="gelsolin_S3_like"/>
    <property type="match status" value="1"/>
</dbReference>
<dbReference type="CDD" id="cd11293">
    <property type="entry name" value="gelsolin_S4_like"/>
    <property type="match status" value="1"/>
</dbReference>
<dbReference type="CDD" id="cd11288">
    <property type="entry name" value="gelsolin_S5_like"/>
    <property type="match status" value="1"/>
</dbReference>
<dbReference type="CDD" id="cd11291">
    <property type="entry name" value="gelsolin_S6_like"/>
    <property type="match status" value="1"/>
</dbReference>
<dbReference type="FunFam" id="3.40.20.10:FF:000001">
    <property type="entry name" value="Gelsolin"/>
    <property type="match status" value="1"/>
</dbReference>
<dbReference type="FunFam" id="3.40.20.10:FF:000002">
    <property type="entry name" value="Gelsolin"/>
    <property type="match status" value="1"/>
</dbReference>
<dbReference type="FunFam" id="3.40.20.10:FF:000005">
    <property type="entry name" value="Gelsolin"/>
    <property type="match status" value="1"/>
</dbReference>
<dbReference type="Gene3D" id="3.40.20.10">
    <property type="entry name" value="Severin"/>
    <property type="match status" value="6"/>
</dbReference>
<dbReference type="InterPro" id="IPR029006">
    <property type="entry name" value="ADF-H/Gelsolin-like_dom_sf"/>
</dbReference>
<dbReference type="InterPro" id="IPR007123">
    <property type="entry name" value="Gelsolin-like_dom"/>
</dbReference>
<dbReference type="InterPro" id="IPR007122">
    <property type="entry name" value="Villin/Gelsolin"/>
</dbReference>
<dbReference type="PANTHER" id="PTHR11977:SF123">
    <property type="entry name" value="GELSOLIN"/>
    <property type="match status" value="1"/>
</dbReference>
<dbReference type="PANTHER" id="PTHR11977">
    <property type="entry name" value="VILLIN"/>
    <property type="match status" value="1"/>
</dbReference>
<dbReference type="Pfam" id="PF00626">
    <property type="entry name" value="Gelsolin"/>
    <property type="match status" value="6"/>
</dbReference>
<dbReference type="PRINTS" id="PR00597">
    <property type="entry name" value="GELSOLIN"/>
</dbReference>
<dbReference type="SMART" id="SM00262">
    <property type="entry name" value="GEL"/>
    <property type="match status" value="6"/>
</dbReference>
<dbReference type="SUPFAM" id="SSF55753">
    <property type="entry name" value="Actin depolymerizing proteins"/>
    <property type="match status" value="6"/>
</dbReference>
<sequence length="754" mass="83522">MVPAFEGAGAVEGLTIWRIENFEVVPYPKEKYGQFYQGDSYIVLYTRDVNGNLSWDLHFWLGSETSQDEAGTAAIKTVELDDQLGGVPVQHREVEGHETSLFLSRFKKGVRYLKGGVASGFHHVDPDAPYPARLFHVKGRRNIRIRQVEVGVGSMNKGDCFILDCGSQVYAYMGPSSRKMDRLKAIQAANPVRADDHAGKAKVIVIDETASGSEAGESSPGLGGGSPDDVADEDTGVDDSAFERSEVNVVTLHHIFEDGDGVIQTNMIGEKPLLQSMLDSGDCFLLDTGVGVYVWIGSGSSKKEKVKSMELAAGYMEKKGYPTYTNVQRVVEKAEPAVFKAYFKTWREPQEQIGLGRVFTQRQMSAVSATETDFDVSSLHAEKRRLLQKNAGPAFALCPIMVLARRNLGPLRTLKLEPVDESTHGFFFGGDSYVLKYIYEVNGNERYILYFWQGCASSQDEKASSAIHTVRLDNELCGKAVQVRVVQGYEPAHFLRIFKGRMVIFLGGKASGFKNVHDHDTYDVDGTRLFRVRGTCDFDTRAIQQTEVAGSLNSDDVFVLETPGKTYLWIGKGASEEEKAMGEKVVELVSPGRDMVTVAEGEEDDDFWGGLGGKGDYQTARDLDRPLLYPRLFHCTISPAGCLRVNEMSDFAQEDLNEDDVMVLDSGDEVYVWVGQGSDDQEKEKAFTMAENYIKTDPTERTLDATVILRINQGEEPAAFTSIFPAWNPDMWQKGLVSYDDMKAQVPETNAAVE</sequence>
<name>GELS_HOMAM</name>
<feature type="chain" id="PRO_0000218726" description="Gelsolin, cytoplasmic">
    <location>
        <begin position="1"/>
        <end position="754"/>
    </location>
</feature>
<feature type="repeat" description="Gelsolin-like 1">
    <location>
        <begin position="22"/>
        <end position="71"/>
    </location>
</feature>
<feature type="repeat" description="Gelsolin-like 2">
    <location>
        <begin position="143"/>
        <end position="183"/>
    </location>
</feature>
<feature type="repeat" description="Gelsolin-like 3">
    <location>
        <begin position="266"/>
        <end position="306"/>
    </location>
</feature>
<feature type="repeat" description="Gelsolin-like 4">
    <location>
        <begin position="414"/>
        <end position="463"/>
    </location>
</feature>
<feature type="repeat" description="Gelsolin-like 5">
    <location>
        <begin position="538"/>
        <end position="580"/>
    </location>
</feature>
<feature type="repeat" description="Gelsolin-like 6">
    <location>
        <begin position="643"/>
        <end position="684"/>
    </location>
</feature>
<feature type="region of interest" description="Actin-severing" evidence="2">
    <location>
        <begin position="1"/>
        <end position="120"/>
    </location>
</feature>
<feature type="region of interest" description="Actin-actin interfilament contact point">
    <location>
        <begin position="68"/>
        <end position="71"/>
    </location>
</feature>
<feature type="region of interest" description="Disordered" evidence="3">
    <location>
        <begin position="209"/>
        <end position="238"/>
    </location>
</feature>
<feature type="region of interest" description="Actin-binding, Ca-sensitive" evidence="2">
    <location>
        <begin position="386"/>
        <end position="751"/>
    </location>
</feature>
<feature type="compositionally biased region" description="Low complexity" evidence="3">
    <location>
        <begin position="210"/>
        <end position="220"/>
    </location>
</feature>
<feature type="binding site" evidence="2">
    <location>
        <begin position="101"/>
        <end position="108"/>
    </location>
    <ligand>
        <name>a 1,2-diacyl-sn-glycero-3-phospho-(1D-myo-inositol-4,5-bisphosphate)</name>
        <dbReference type="ChEBI" id="CHEBI:58456"/>
    </ligand>
</feature>
<feature type="binding site" evidence="2">
    <location>
        <begin position="133"/>
        <end position="141"/>
    </location>
    <ligand>
        <name>a 1,2-diacyl-sn-glycero-3-phospho-(1D-myo-inositol-4,5-bisphosphate)</name>
        <dbReference type="ChEBI" id="CHEBI:58456"/>
    </ligand>
</feature>
<feature type="binding site" evidence="1">
    <location>
        <position position="430"/>
    </location>
    <ligand>
        <name>Ca(2+)</name>
        <dbReference type="ChEBI" id="CHEBI:29108"/>
        <label>1</label>
    </ligand>
</feature>
<feature type="binding site" evidence="1">
    <location>
        <position position="431"/>
    </location>
    <ligand>
        <name>Ca(2+)</name>
        <dbReference type="ChEBI" id="CHEBI:29108"/>
        <label>1</label>
    </ligand>
</feature>
<feature type="binding site" evidence="1">
    <location>
        <position position="461"/>
    </location>
    <ligand>
        <name>Ca(2+)</name>
        <dbReference type="ChEBI" id="CHEBI:29108"/>
        <label>1</label>
    </ligand>
</feature>
<feature type="binding site" evidence="1">
    <location>
        <position position="556"/>
    </location>
    <ligand>
        <name>Ca(2+)</name>
        <dbReference type="ChEBI" id="CHEBI:29108"/>
        <label>2</label>
    </ligand>
</feature>
<feature type="binding site" evidence="1">
    <location>
        <position position="578"/>
    </location>
    <ligand>
        <name>Ca(2+)</name>
        <dbReference type="ChEBI" id="CHEBI:29108"/>
        <label>2</label>
    </ligand>
</feature>
<feature type="binding site" evidence="1">
    <location>
        <position position="659"/>
    </location>
    <ligand>
        <name>Ca(2+)</name>
        <dbReference type="ChEBI" id="CHEBI:29108"/>
        <label>3</label>
    </ligand>
</feature>
<feature type="binding site" evidence="1">
    <location>
        <position position="660"/>
    </location>
    <ligand>
        <name>Ca(2+)</name>
        <dbReference type="ChEBI" id="CHEBI:29108"/>
        <label>3</label>
    </ligand>
</feature>
<feature type="binding site" evidence="1">
    <location>
        <position position="682"/>
    </location>
    <ligand>
        <name>Ca(2+)</name>
        <dbReference type="ChEBI" id="CHEBI:29108"/>
        <label>3</label>
    </ligand>
</feature>
<keyword id="KW-0117">Actin capping</keyword>
<keyword id="KW-0009">Actin-binding</keyword>
<keyword id="KW-0106">Calcium</keyword>
<keyword id="KW-0963">Cytoplasm</keyword>
<keyword id="KW-0206">Cytoskeleton</keyword>
<keyword id="KW-0903">Direct protein sequencing</keyword>
<keyword id="KW-0479">Metal-binding</keyword>
<keyword id="KW-0677">Repeat</keyword>
<comment type="function">
    <text>Calcium-regulated, actin-modulating protein that binds to the plus (or barbed) ends of actin monomers or filaments, preventing monomer exchange (end-blocking or capping). It can promote the assembly of monomers into filaments (nucleation) as well as sever filaments already formed.</text>
</comment>
<comment type="subcellular location">
    <subcellularLocation>
        <location>Cytoplasm</location>
        <location>Cytoskeleton</location>
    </subcellularLocation>
</comment>
<comment type="tissue specificity">
    <text>Tail muscle.</text>
</comment>
<comment type="induction">
    <text>Interaction with actin is suppressed by PIP2.</text>
</comment>
<comment type="similarity">
    <text evidence="4">Belongs to the villin/gelsolin family.</text>
</comment>
<proteinExistence type="evidence at protein level"/>
<reference key="1">
    <citation type="journal article" date="1995" name="Biochem. J.">
        <title>A gelsolin-related protein from lobster muscle: cloning, sequence analysis and expression.</title>
        <authorList>
            <person name="Lueck A."/>
            <person name="D'Haese J."/>
            <person name="Hinssen H."/>
        </authorList>
    </citation>
    <scope>NUCLEOTIDE SEQUENCE [MRNA]</scope>
    <scope>PROTEIN SEQUENCE OF 360-395 AND 514-544</scope>
    <source>
        <tissue>Tail muscle</tissue>
    </source>
</reference>
<organism>
    <name type="scientific">Homarus americanus</name>
    <name type="common">American lobster</name>
    <dbReference type="NCBI Taxonomy" id="6706"/>
    <lineage>
        <taxon>Eukaryota</taxon>
        <taxon>Metazoa</taxon>
        <taxon>Ecdysozoa</taxon>
        <taxon>Arthropoda</taxon>
        <taxon>Crustacea</taxon>
        <taxon>Multicrustacea</taxon>
        <taxon>Malacostraca</taxon>
        <taxon>Eumalacostraca</taxon>
        <taxon>Eucarida</taxon>
        <taxon>Decapoda</taxon>
        <taxon>Pleocyemata</taxon>
        <taxon>Astacidea</taxon>
        <taxon>Nephropoidea</taxon>
        <taxon>Nephropidae</taxon>
        <taxon>Homarus</taxon>
    </lineage>
</organism>